<reference key="1">
    <citation type="journal article" date="1993" name="Plant Mol. Biol.">
        <title>Construction of a Synechocystis PCC6803 mutant suitable for the study of variant hexadecameric ribulose bisphosphate carboxylase/oxygenase enzymes.</title>
        <authorList>
            <person name="Amichay D."/>
            <person name="Levitz R."/>
            <person name="Gurevitz M."/>
        </authorList>
    </citation>
    <scope>NUCLEOTIDE SEQUENCE [GENOMIC DNA]</scope>
</reference>
<reference key="2">
    <citation type="journal article" date="1995" name="DNA Res.">
        <title>Sequence analysis of the genome of the unicellular cyanobacterium Synechocystis sp. strain PCC6803. I. Sequence features in the 1 Mb region from map positions 64% to 92% of the genome.</title>
        <authorList>
            <person name="Kaneko T."/>
            <person name="Tanaka A."/>
            <person name="Sato S."/>
            <person name="Kotani H."/>
            <person name="Sazuka T."/>
            <person name="Miyajima N."/>
            <person name="Sugiura M."/>
            <person name="Tabata S."/>
        </authorList>
    </citation>
    <scope>NUCLEOTIDE SEQUENCE [LARGE SCALE GENOMIC DNA]</scope>
    <source>
        <strain>ATCC 27184 / PCC 6803 / N-1</strain>
    </source>
</reference>
<reference key="3">
    <citation type="journal article" date="1996" name="DNA Res.">
        <title>Sequence analysis of the genome of the unicellular cyanobacterium Synechocystis sp. strain PCC6803. II. Sequence determination of the entire genome and assignment of potential protein-coding regions.</title>
        <authorList>
            <person name="Kaneko T."/>
            <person name="Sato S."/>
            <person name="Kotani H."/>
            <person name="Tanaka A."/>
            <person name="Asamizu E."/>
            <person name="Nakamura Y."/>
            <person name="Miyajima N."/>
            <person name="Hirosawa M."/>
            <person name="Sugiura M."/>
            <person name="Sasamoto S."/>
            <person name="Kimura T."/>
            <person name="Hosouchi T."/>
            <person name="Matsuno A."/>
            <person name="Muraki A."/>
            <person name="Nakazaki N."/>
            <person name="Naruo K."/>
            <person name="Okumura S."/>
            <person name="Shimpo S."/>
            <person name="Takeuchi C."/>
            <person name="Wada T."/>
            <person name="Watanabe A."/>
            <person name="Yamada M."/>
            <person name="Yasuda M."/>
            <person name="Tabata S."/>
        </authorList>
    </citation>
    <scope>NUCLEOTIDE SEQUENCE [LARGE SCALE GENOMIC DNA]</scope>
    <source>
        <strain>ATCC 27184 / PCC 6803 / Kazusa</strain>
    </source>
</reference>
<reference key="4">
    <citation type="journal article" date="1997" name="Electrophoresis">
        <title>Towards a proteome project of cyanobacterium Synechocystis sp. strain PCC6803: linking 130 protein spots with their respective genes.</title>
        <authorList>
            <person name="Sazuka T."/>
            <person name="Ohara O."/>
        </authorList>
    </citation>
    <scope>PROTEIN SEQUENCE OF 1-11</scope>
</reference>
<reference key="5">
    <citation type="journal article" date="2008" name="J. Bacteriol.">
        <title>A multiprotein bicarbonate dehydration complex essential to carboxysome function in cyanobacteria.</title>
        <authorList>
            <person name="Cot S.S."/>
            <person name="So A.K."/>
            <person name="Espie G.S."/>
        </authorList>
    </citation>
    <scope>INTERACTION WITH CCMM</scope>
    <scope>SUBCELLULAR LOCATION</scope>
    <source>
        <strain>ATCC 27184 / PCC 6803 / Kazusa</strain>
    </source>
</reference>
<dbReference type="EMBL" id="X65960">
    <property type="protein sequence ID" value="CAA46774.1"/>
    <property type="molecule type" value="Genomic_DNA"/>
</dbReference>
<dbReference type="EMBL" id="BA000022">
    <property type="protein sequence ID" value="BAA10192.1"/>
    <property type="molecule type" value="Genomic_DNA"/>
</dbReference>
<dbReference type="PIR" id="S39562">
    <property type="entry name" value="S39562"/>
</dbReference>
<dbReference type="SMR" id="P54206"/>
<dbReference type="IntAct" id="P54206">
    <property type="interactions" value="17"/>
</dbReference>
<dbReference type="STRING" id="1148.gene:10499689"/>
<dbReference type="PaxDb" id="1148-1001565"/>
<dbReference type="EnsemblBacteria" id="BAA10192">
    <property type="protein sequence ID" value="BAA10192"/>
    <property type="gene ID" value="BAA10192"/>
</dbReference>
<dbReference type="KEGG" id="syn:slr0012"/>
<dbReference type="eggNOG" id="COG4451">
    <property type="taxonomic scope" value="Bacteria"/>
</dbReference>
<dbReference type="InParanoid" id="P54206"/>
<dbReference type="PhylomeDB" id="P54206"/>
<dbReference type="BioCyc" id="MetaCyc:MONOMER-751"/>
<dbReference type="SABIO-RK" id="P54206"/>
<dbReference type="Proteomes" id="UP000001425">
    <property type="component" value="Chromosome"/>
</dbReference>
<dbReference type="GO" id="GO:0031470">
    <property type="term" value="C:carboxysome"/>
    <property type="evidence" value="ECO:0000314"/>
    <property type="project" value="UniProtKB"/>
</dbReference>
<dbReference type="GO" id="GO:0016984">
    <property type="term" value="F:ribulose-bisphosphate carboxylase activity"/>
    <property type="evidence" value="ECO:0007669"/>
    <property type="project" value="UniProtKB-UniRule"/>
</dbReference>
<dbReference type="GO" id="GO:0009853">
    <property type="term" value="P:photorespiration"/>
    <property type="evidence" value="ECO:0007669"/>
    <property type="project" value="UniProtKB-KW"/>
</dbReference>
<dbReference type="GO" id="GO:0019253">
    <property type="term" value="P:reductive pentose-phosphate cycle"/>
    <property type="evidence" value="ECO:0007669"/>
    <property type="project" value="UniProtKB-UniRule"/>
</dbReference>
<dbReference type="CDD" id="cd03527">
    <property type="entry name" value="RuBisCO_small"/>
    <property type="match status" value="1"/>
</dbReference>
<dbReference type="Gene3D" id="3.30.190.10">
    <property type="entry name" value="Ribulose bisphosphate carboxylase, small subunit"/>
    <property type="match status" value="1"/>
</dbReference>
<dbReference type="HAMAP" id="MF_00859">
    <property type="entry name" value="RuBisCO_S_bact"/>
    <property type="match status" value="1"/>
</dbReference>
<dbReference type="InterPro" id="IPR024681">
    <property type="entry name" value="RuBisCO_ssu"/>
</dbReference>
<dbReference type="InterPro" id="IPR000894">
    <property type="entry name" value="RuBisCO_ssu_dom"/>
</dbReference>
<dbReference type="InterPro" id="IPR036385">
    <property type="entry name" value="RuBisCO_ssu_sf"/>
</dbReference>
<dbReference type="PANTHER" id="PTHR31262">
    <property type="entry name" value="RIBULOSE BISPHOSPHATE CARBOXYLASE SMALL CHAIN 1, CHLOROPLASTIC"/>
    <property type="match status" value="1"/>
</dbReference>
<dbReference type="Pfam" id="PF00101">
    <property type="entry name" value="RuBisCO_small"/>
    <property type="match status" value="1"/>
</dbReference>
<dbReference type="SMART" id="SM00961">
    <property type="entry name" value="RuBisCO_small"/>
    <property type="match status" value="1"/>
</dbReference>
<dbReference type="SUPFAM" id="SSF55239">
    <property type="entry name" value="RuBisCO, small subunit"/>
    <property type="match status" value="1"/>
</dbReference>
<accession>P54206</accession>
<sequence>MKTLPKERRYETLSYLPPLTDQQIAKQVEFLLDQGFIPGVEFEEDPQPETHFWTMWKLPFFGGATANEVLAEVRECRSENPNCYIRVIGFDNIKQCQTVSFIVHKPNQNQGRY</sequence>
<protein>
    <recommendedName>
        <fullName evidence="2">Ribulose bisphosphate carboxylase small subunit</fullName>
        <shortName evidence="2">RuBisCO small subunit</shortName>
    </recommendedName>
</protein>
<name>RBS_SYNY3</name>
<keyword id="KW-1283">Bacterial microcompartment</keyword>
<keyword id="KW-0113">Calvin cycle</keyword>
<keyword id="KW-0120">Carbon dioxide fixation</keyword>
<keyword id="KW-1282">Carboxysome</keyword>
<keyword id="KW-0903">Direct protein sequencing</keyword>
<keyword id="KW-0601">Photorespiration</keyword>
<keyword id="KW-0602">Photosynthesis</keyword>
<keyword id="KW-1185">Reference proteome</keyword>
<feature type="chain" id="PRO_0000198627" description="Ribulose bisphosphate carboxylase small subunit">
    <location>
        <begin position="1"/>
        <end position="113"/>
    </location>
</feature>
<comment type="function">
    <text evidence="2">RuBisCO catalyzes two reactions: the carboxylation of D-ribulose 1,5-bisphosphate, the primary event in carbon dioxide fixation, as well as the oxidative fragmentation of the pentose substrate in the photorespiration process. Both reactions occur simultaneously and in competition at the same active site. Although the small subunit is not catalytic it is essential for maximal activity.</text>
</comment>
<comment type="subunit">
    <text evidence="3">Heterohexadecamer of 8 large and 8 small subunits. RuBisCO interacts with the C-terminus of CcmM, and can be found in complexes that also include carbonic anhydrase (ccaA) (PubMed:17993516).</text>
</comment>
<comment type="subcellular location">
    <subcellularLocation>
        <location evidence="2 3">Carboxysome</location>
    </subcellularLocation>
    <text evidence="1 3">This cyanobacterium makes beta-type carboxysomes. RuBisCO associates with both the internal and shell portion of carboxysomes (PubMed:17993516). In the carboxysome RuBisCO is organized into a paracrystalline array (By similarity).</text>
</comment>
<comment type="miscellaneous">
    <text evidence="2">The basic functional RuBisCO is composed of a large chain homodimer in a 'head-to-tail' conformation. In form I RuBisCO this homodimer is arranged in a barrel-like tetramer with the small subunits forming a tetrameric 'cap' on each end of the 'barrel'.</text>
</comment>
<comment type="similarity">
    <text evidence="2">Belongs to the RuBisCO small chain family.</text>
</comment>
<proteinExistence type="evidence at protein level"/>
<gene>
    <name evidence="2" type="primary">cbbS</name>
    <name evidence="2" type="synonym">rbcS</name>
    <name type="ordered locus">slr0012</name>
</gene>
<evidence type="ECO:0000250" key="1">
    <source>
        <dbReference type="UniProtKB" id="Q31NB2"/>
    </source>
</evidence>
<evidence type="ECO:0000255" key="2">
    <source>
        <dbReference type="HAMAP-Rule" id="MF_00859"/>
    </source>
</evidence>
<evidence type="ECO:0000269" key="3">
    <source>
    </source>
</evidence>
<organism>
    <name type="scientific">Synechocystis sp. (strain ATCC 27184 / PCC 6803 / Kazusa)</name>
    <dbReference type="NCBI Taxonomy" id="1111708"/>
    <lineage>
        <taxon>Bacteria</taxon>
        <taxon>Bacillati</taxon>
        <taxon>Cyanobacteriota</taxon>
        <taxon>Cyanophyceae</taxon>
        <taxon>Synechococcales</taxon>
        <taxon>Merismopediaceae</taxon>
        <taxon>Synechocystis</taxon>
    </lineage>
</organism>